<name>MSX1_PANTR</name>
<sequence length="303" mass="31496">MAPAADMTSLPLGVKVEDSAFGKPAGGGAGQAPSAAAATAAAMGADEEGAKPKVSPSLLPFSVEALMADHRKPGAKESALAPSEGVQAAGGSAQPLGVPPGSLGAPDAPSSPRPLGHFSVGGLLKLPEDALVKAESPEKPERTPWMQSPRFSPPPARRLSPPACTLRKHKTNRKPRTPFTTAQLLALERKFRQKQYLSIAERAEFSSSLSLTETQVKIWFQNRRAKAKRLQEAELEKLKMAAKPMLPPAAFGLSFPLGGPAAVAAAAGASLYGASGPFQRAALPVAPVGLYTAHVGYSMYHLT</sequence>
<gene>
    <name evidence="1" type="primary">MSX1</name>
</gene>
<protein>
    <recommendedName>
        <fullName evidence="5">Homeobox protein MSX-1</fullName>
    </recommendedName>
    <alternativeName>
        <fullName>Msh homeobox 1-like protein</fullName>
    </alternativeName>
</protein>
<proteinExistence type="inferred from homology"/>
<feature type="propeptide" id="PRO_0000441102" description="Removed in mature form" evidence="5">
    <location>
        <begin position="1"/>
        <end position="6"/>
    </location>
</feature>
<feature type="chain" id="PRO_0000049092" description="Homeobox protein MSX-1">
    <location>
        <begin position="7"/>
        <end position="303"/>
    </location>
</feature>
<feature type="DNA-binding region" description="Homeobox" evidence="3">
    <location>
        <begin position="172"/>
        <end position="231"/>
    </location>
</feature>
<feature type="region of interest" description="Disordered" evidence="4">
    <location>
        <begin position="18"/>
        <end position="55"/>
    </location>
</feature>
<feature type="region of interest" description="Disordered" evidence="4">
    <location>
        <begin position="69"/>
        <end position="117"/>
    </location>
</feature>
<feature type="region of interest" description="Disordered" evidence="4">
    <location>
        <begin position="133"/>
        <end position="174"/>
    </location>
</feature>
<feature type="compositionally biased region" description="Low complexity" evidence="4">
    <location>
        <begin position="31"/>
        <end position="44"/>
    </location>
</feature>
<feature type="compositionally biased region" description="Basic and acidic residues" evidence="4">
    <location>
        <begin position="133"/>
        <end position="142"/>
    </location>
</feature>
<feature type="cross-link" description="Glycyl lysine isopeptide (Lys-Gly) (interchain with G-Cter in SUMO)" evidence="1">
    <location>
        <position position="15"/>
    </location>
</feature>
<feature type="cross-link" description="Glycyl lysine isopeptide (Lys-Gly) (interchain with G-Cter in SUMO)" evidence="1">
    <location>
        <position position="133"/>
    </location>
</feature>
<reference key="1">
    <citation type="journal article" date="2006" name="Mol. Biol. Evol.">
        <title>Molecular evolution of the primate developmental genes MSX1 and PAX9.</title>
        <authorList>
            <person name="Perry G.H."/>
            <person name="Verrelli B.C."/>
            <person name="Stone A.C."/>
        </authorList>
    </citation>
    <scope>NUCLEOTIDE SEQUENCE [GENOMIC DNA] OF 7-303</scope>
    <source>
        <strain>Isolate ISIS 2417</strain>
    </source>
</reference>
<comment type="function">
    <text evidence="1 2">Acts as a transcriptional repressor (By similarity). Capable of transcription autoinactivation (By similarity). Binds to the consensus sequence 5'-C/GTAAT-3' in downstream activin regulatory elements (DARE) in the gene promoter, thereby repressing the transcription of CGA/alpha-GSU and GNRHR (By similarity). Binds to core enhancer regions in target gene promoter regions of myoblast differentiation factors, thereby inhibits transcription and myoblast differentiation, its interaction with PIAS1 facilitates it binding specificity at gene promoter regions (By similarity). Thereby inhibits the differentiation of myoblasts via transcriptional repression of differentiation factors (By similarity). Regulates, in a stage-specific manner, a developmental program of gene expression in the fetal tooth bud that controls odontoblast differentiation and proliferation of dental mesenchymal cells (By similarity). At the bud stage, required for mesenchymal molar tooth bud development via facilitating reciprocal signaling between dental epithelial and mesenchymal cells (By similarity). May also regulate expression of Wnt antagonists such as DKK2 and SFPR2 in the developing tooth mesenchyme (By similarity). Required for BMP4 expression in dental mesenchyme cells (By similarity). Also, in response to BMP4, required for BMP4 expression in neighboring dental epithelial cells (By similarity). Required for maximal FGF4-induced expression of SDC1 in dental mesenchyme cells (By similarity). Also in response to SDC1, required for SDC1 expression in neighboring dental epithelial cells (By similarity). At the early bell stage, acts to drive proliferation of dental mesenchyme cells, however during the late bell stage acts as a homeostatic regulator of the cell cycle (By similarity). Regulates proliferation and inhibits premature mesenchymal odontogenesis during the bell stage via inhibition of the Wnt signaling component CTNNB1 and subsequent repression of the odontoblast differentiation factors BMP2, BMP4, LEF1, ALPL and BGLAP/OCN (By similarity). Additionally, required for correct development and fusion of the palatal shelves and embryonic mandibular formation (By similarity). Plays a role in embryonic bone formation of the middle ear, skull and nasal bones (By similarity). Required for correct formation and thickness of the nail plate (By similarity). May play a role in limb-pattern formation (By similarity).</text>
</comment>
<comment type="subunit">
    <text evidence="1">Interacts with CREBBP/CBP, TBP and SP1; interaction with these transcription activators may inhibit autoinactivation (By similarity). Interacts (via C-terminus) with PIAS1 (via N-terminus); the interaction is required for the localization of both proteins to the nuclear periphery and specific binding of MSX1 to the core enhancer region in target gene promoters (By similarity). Interacts with H1-5 (By similarity).</text>
</comment>
<comment type="subcellular location">
    <subcellularLocation>
        <location evidence="1">Nucleus</location>
    </subcellularLocation>
    <text evidence="1">Interaction with PIAS1 is required for localization to the nuclear periphery (By similarity).</text>
</comment>
<comment type="PTM">
    <text evidence="1">Sumoylated by PIAS1, desumoylated by SENP1 (By similarity). Sumoylation of Lys-15 and Lys-133 not required for interaction with H1-5, transcriptional repression, inhibition of myoblast differentiation, or binding to gene promoters (By similarity).</text>
</comment>
<comment type="similarity">
    <text evidence="5">Belongs to the Msh homeobox family.</text>
</comment>
<comment type="caution">
    <text evidence="5">It is uncertain whether Met-1 or Met-7 is the initiator.</text>
</comment>
<evidence type="ECO:0000250" key="1">
    <source>
        <dbReference type="UniProtKB" id="P13297"/>
    </source>
</evidence>
<evidence type="ECO:0000250" key="2">
    <source>
        <dbReference type="UniProtKB" id="P28360"/>
    </source>
</evidence>
<evidence type="ECO:0000255" key="3">
    <source>
        <dbReference type="PROSITE-ProRule" id="PRU00108"/>
    </source>
</evidence>
<evidence type="ECO:0000256" key="4">
    <source>
        <dbReference type="SAM" id="MobiDB-lite"/>
    </source>
</evidence>
<evidence type="ECO:0000305" key="5"/>
<organism>
    <name type="scientific">Pan troglodytes</name>
    <name type="common">Chimpanzee</name>
    <dbReference type="NCBI Taxonomy" id="9598"/>
    <lineage>
        <taxon>Eukaryota</taxon>
        <taxon>Metazoa</taxon>
        <taxon>Chordata</taxon>
        <taxon>Craniata</taxon>
        <taxon>Vertebrata</taxon>
        <taxon>Euteleostomi</taxon>
        <taxon>Mammalia</taxon>
        <taxon>Eutheria</taxon>
        <taxon>Euarchontoglires</taxon>
        <taxon>Primates</taxon>
        <taxon>Haplorrhini</taxon>
        <taxon>Catarrhini</taxon>
        <taxon>Hominidae</taxon>
        <taxon>Pan</taxon>
    </lineage>
</organism>
<dbReference type="EMBL" id="DQ067469">
    <property type="protein sequence ID" value="AAZ30465.1"/>
    <property type="molecule type" value="Genomic_DNA"/>
</dbReference>
<dbReference type="EMBL" id="DQ067468">
    <property type="protein sequence ID" value="AAZ30465.1"/>
    <property type="status" value="JOINED"/>
    <property type="molecule type" value="Genomic_DNA"/>
</dbReference>
<dbReference type="RefSeq" id="NP_001182191.1">
    <property type="nucleotide sequence ID" value="NM_001195262.4"/>
</dbReference>
<dbReference type="SMR" id="Q2VL88"/>
<dbReference type="FunCoup" id="Q2VL88">
    <property type="interactions" value="1840"/>
</dbReference>
<dbReference type="STRING" id="9598.ENSPTRP00000055966"/>
<dbReference type="PaxDb" id="9598-ENSPTRP00000055966"/>
<dbReference type="Ensembl" id="ENSPTRT00000064413.3">
    <property type="protein sequence ID" value="ENSPTRP00000055966.2"/>
    <property type="gene ID" value="ENSPTRG00000015871.6"/>
</dbReference>
<dbReference type="GeneID" id="461092"/>
<dbReference type="KEGG" id="ptr:461092"/>
<dbReference type="CTD" id="4487"/>
<dbReference type="VGNC" id="VGNC:641">
    <property type="gene designation" value="MSX1"/>
</dbReference>
<dbReference type="eggNOG" id="KOG0492">
    <property type="taxonomic scope" value="Eukaryota"/>
</dbReference>
<dbReference type="GeneTree" id="ENSGT00940000161623"/>
<dbReference type="HOGENOM" id="CLU_072675_1_0_1"/>
<dbReference type="InParanoid" id="Q2VL88"/>
<dbReference type="OMA" id="WMQTPRF"/>
<dbReference type="OrthoDB" id="15958at9604"/>
<dbReference type="Proteomes" id="UP000002277">
    <property type="component" value="Chromosome 4"/>
</dbReference>
<dbReference type="Bgee" id="ENSPTRG00000015871">
    <property type="expression patterns" value="Expressed in heart and 18 other cell types or tissues"/>
</dbReference>
<dbReference type="GO" id="GO:0034399">
    <property type="term" value="C:nuclear periphery"/>
    <property type="evidence" value="ECO:0000250"/>
    <property type="project" value="UniProtKB"/>
</dbReference>
<dbReference type="GO" id="GO:0005654">
    <property type="term" value="C:nucleoplasm"/>
    <property type="evidence" value="ECO:0007669"/>
    <property type="project" value="Ensembl"/>
</dbReference>
<dbReference type="GO" id="GO:0005634">
    <property type="term" value="C:nucleus"/>
    <property type="evidence" value="ECO:0000318"/>
    <property type="project" value="GO_Central"/>
</dbReference>
<dbReference type="GO" id="GO:0005667">
    <property type="term" value="C:transcription regulator complex"/>
    <property type="evidence" value="ECO:0007669"/>
    <property type="project" value="Ensembl"/>
</dbReference>
<dbReference type="GO" id="GO:0000987">
    <property type="term" value="F:cis-regulatory region sequence-specific DNA binding"/>
    <property type="evidence" value="ECO:0007669"/>
    <property type="project" value="Ensembl"/>
</dbReference>
<dbReference type="GO" id="GO:0001228">
    <property type="term" value="F:DNA-binding transcription activator activity, RNA polymerase II-specific"/>
    <property type="evidence" value="ECO:0007669"/>
    <property type="project" value="Ensembl"/>
</dbReference>
<dbReference type="GO" id="GO:0000981">
    <property type="term" value="F:DNA-binding transcription factor activity, RNA polymerase II-specific"/>
    <property type="evidence" value="ECO:0000318"/>
    <property type="project" value="GO_Central"/>
</dbReference>
<dbReference type="GO" id="GO:0001227">
    <property type="term" value="F:DNA-binding transcription repressor activity, RNA polymerase II-specific"/>
    <property type="evidence" value="ECO:0007669"/>
    <property type="project" value="Ensembl"/>
</dbReference>
<dbReference type="GO" id="GO:0002039">
    <property type="term" value="F:p53 binding"/>
    <property type="evidence" value="ECO:0007669"/>
    <property type="project" value="Ensembl"/>
</dbReference>
<dbReference type="GO" id="GO:0000977">
    <property type="term" value="F:RNA polymerase II transcription regulatory region sequence-specific DNA binding"/>
    <property type="evidence" value="ECO:0000318"/>
    <property type="project" value="GO_Central"/>
</dbReference>
<dbReference type="GO" id="GO:0000976">
    <property type="term" value="F:transcription cis-regulatory region binding"/>
    <property type="evidence" value="ECO:0000250"/>
    <property type="project" value="UniProtKB"/>
</dbReference>
<dbReference type="GO" id="GO:0090427">
    <property type="term" value="P:activation of meiosis"/>
    <property type="evidence" value="ECO:0007669"/>
    <property type="project" value="Ensembl"/>
</dbReference>
<dbReference type="GO" id="GO:0009952">
    <property type="term" value="P:anterior/posterior pattern specification"/>
    <property type="evidence" value="ECO:0007669"/>
    <property type="project" value="Ensembl"/>
</dbReference>
<dbReference type="GO" id="GO:0030509">
    <property type="term" value="P:BMP signaling pathway"/>
    <property type="evidence" value="ECO:0007669"/>
    <property type="project" value="Ensembl"/>
</dbReference>
<dbReference type="GO" id="GO:0060349">
    <property type="term" value="P:bone morphogenesis"/>
    <property type="evidence" value="ECO:0007669"/>
    <property type="project" value="Ensembl"/>
</dbReference>
<dbReference type="GO" id="GO:0060536">
    <property type="term" value="P:cartilage morphogenesis"/>
    <property type="evidence" value="ECO:0007669"/>
    <property type="project" value="Ensembl"/>
</dbReference>
<dbReference type="GO" id="GO:0000902">
    <property type="term" value="P:cell morphogenesis"/>
    <property type="evidence" value="ECO:0007669"/>
    <property type="project" value="Ensembl"/>
</dbReference>
<dbReference type="GO" id="GO:0061311">
    <property type="term" value="P:cell surface receptor signaling pathway involved in heart development"/>
    <property type="evidence" value="ECO:0007669"/>
    <property type="project" value="Ensembl"/>
</dbReference>
<dbReference type="GO" id="GO:0035115">
    <property type="term" value="P:embryonic forelimb morphogenesis"/>
    <property type="evidence" value="ECO:0007669"/>
    <property type="project" value="Ensembl"/>
</dbReference>
<dbReference type="GO" id="GO:0035116">
    <property type="term" value="P:embryonic hindlimb morphogenesis"/>
    <property type="evidence" value="ECO:0007669"/>
    <property type="project" value="Ensembl"/>
</dbReference>
<dbReference type="GO" id="GO:0048598">
    <property type="term" value="P:embryonic morphogenesis"/>
    <property type="evidence" value="ECO:0000318"/>
    <property type="project" value="GO_Central"/>
</dbReference>
<dbReference type="GO" id="GO:0035880">
    <property type="term" value="P:embryonic nail plate morphogenesis"/>
    <property type="evidence" value="ECO:0007669"/>
    <property type="project" value="Ensembl"/>
</dbReference>
<dbReference type="GO" id="GO:0003198">
    <property type="term" value="P:epithelial to mesenchymal transition involved in endocardial cushion formation"/>
    <property type="evidence" value="ECO:0007669"/>
    <property type="project" value="Ensembl"/>
</dbReference>
<dbReference type="GO" id="GO:0060325">
    <property type="term" value="P:face morphogenesis"/>
    <property type="evidence" value="ECO:0007669"/>
    <property type="project" value="Ensembl"/>
</dbReference>
<dbReference type="GO" id="GO:0030900">
    <property type="term" value="P:forebrain development"/>
    <property type="evidence" value="ECO:0007669"/>
    <property type="project" value="Ensembl"/>
</dbReference>
<dbReference type="GO" id="GO:0001701">
    <property type="term" value="P:in utero embryonic development"/>
    <property type="evidence" value="ECO:0007669"/>
    <property type="project" value="Ensembl"/>
</dbReference>
<dbReference type="GO" id="GO:0048839">
    <property type="term" value="P:inner ear development"/>
    <property type="evidence" value="ECO:0000250"/>
    <property type="project" value="UniProtKB"/>
</dbReference>
<dbReference type="GO" id="GO:0061180">
    <property type="term" value="P:mammary gland epithelium development"/>
    <property type="evidence" value="ECO:0007669"/>
    <property type="project" value="Ensembl"/>
</dbReference>
<dbReference type="GO" id="GO:0097152">
    <property type="term" value="P:mesenchymal cell apoptotic process"/>
    <property type="evidence" value="ECO:0007669"/>
    <property type="project" value="Ensembl"/>
</dbReference>
<dbReference type="GO" id="GO:0010463">
    <property type="term" value="P:mesenchymal cell proliferation"/>
    <property type="evidence" value="ECO:0007669"/>
    <property type="project" value="Ensembl"/>
</dbReference>
<dbReference type="GO" id="GO:0030901">
    <property type="term" value="P:midbrain development"/>
    <property type="evidence" value="ECO:0007669"/>
    <property type="project" value="Ensembl"/>
</dbReference>
<dbReference type="GO" id="GO:0042474">
    <property type="term" value="P:middle ear morphogenesis"/>
    <property type="evidence" value="ECO:0007669"/>
    <property type="project" value="Ensembl"/>
</dbReference>
<dbReference type="GO" id="GO:0007517">
    <property type="term" value="P:muscle organ development"/>
    <property type="evidence" value="ECO:0007669"/>
    <property type="project" value="Ensembl"/>
</dbReference>
<dbReference type="GO" id="GO:0043066">
    <property type="term" value="P:negative regulation of apoptotic process"/>
    <property type="evidence" value="ECO:0007669"/>
    <property type="project" value="Ensembl"/>
</dbReference>
<dbReference type="GO" id="GO:0030308">
    <property type="term" value="P:negative regulation of cell growth"/>
    <property type="evidence" value="ECO:0007669"/>
    <property type="project" value="Ensembl"/>
</dbReference>
<dbReference type="GO" id="GO:0008285">
    <property type="term" value="P:negative regulation of cell population proliferation"/>
    <property type="evidence" value="ECO:0007669"/>
    <property type="project" value="Ensembl"/>
</dbReference>
<dbReference type="GO" id="GO:0010629">
    <property type="term" value="P:negative regulation of gene expression"/>
    <property type="evidence" value="ECO:0000250"/>
    <property type="project" value="UniProtKB"/>
</dbReference>
<dbReference type="GO" id="GO:1901330">
    <property type="term" value="P:negative regulation of odontoblast differentiation"/>
    <property type="evidence" value="ECO:0000250"/>
    <property type="project" value="UniProtKB"/>
</dbReference>
<dbReference type="GO" id="GO:0051154">
    <property type="term" value="P:negative regulation of striated muscle cell differentiation"/>
    <property type="evidence" value="ECO:0007669"/>
    <property type="project" value="Ensembl"/>
</dbReference>
<dbReference type="GO" id="GO:0043584">
    <property type="term" value="P:nose development"/>
    <property type="evidence" value="ECO:0000250"/>
    <property type="project" value="UniProtKB"/>
</dbReference>
<dbReference type="GO" id="GO:0042475">
    <property type="term" value="P:odontogenesis of dentin-containing tooth"/>
    <property type="evidence" value="ECO:0007669"/>
    <property type="project" value="Ensembl"/>
</dbReference>
<dbReference type="GO" id="GO:0030513">
    <property type="term" value="P:positive regulation of BMP signaling pathway"/>
    <property type="evidence" value="ECO:0007669"/>
    <property type="project" value="Ensembl"/>
</dbReference>
<dbReference type="GO" id="GO:0045787">
    <property type="term" value="P:positive regulation of cell cycle"/>
    <property type="evidence" value="ECO:0000250"/>
    <property type="project" value="UniProtKB"/>
</dbReference>
<dbReference type="GO" id="GO:1902255">
    <property type="term" value="P:positive regulation of intrinsic apoptotic signaling pathway by p53 class mediator"/>
    <property type="evidence" value="ECO:0007669"/>
    <property type="project" value="Ensembl"/>
</dbReference>
<dbReference type="GO" id="GO:2001055">
    <property type="term" value="P:positive regulation of mesenchymal cell apoptotic process"/>
    <property type="evidence" value="ECO:0007669"/>
    <property type="project" value="Ensembl"/>
</dbReference>
<dbReference type="GO" id="GO:0042482">
    <property type="term" value="P:positive regulation of odontogenesis"/>
    <property type="evidence" value="ECO:0000250"/>
    <property type="project" value="UniProtKB"/>
</dbReference>
<dbReference type="GO" id="GO:0034504">
    <property type="term" value="P:protein localization to nucleus"/>
    <property type="evidence" value="ECO:0007669"/>
    <property type="project" value="Ensembl"/>
</dbReference>
<dbReference type="GO" id="GO:0050821">
    <property type="term" value="P:protein stabilization"/>
    <property type="evidence" value="ECO:0007669"/>
    <property type="project" value="Ensembl"/>
</dbReference>
<dbReference type="GO" id="GO:0042481">
    <property type="term" value="P:regulation of odontogenesis"/>
    <property type="evidence" value="ECO:0000250"/>
    <property type="project" value="UniProtKB"/>
</dbReference>
<dbReference type="GO" id="GO:0006357">
    <property type="term" value="P:regulation of transcription by RNA polymerase II"/>
    <property type="evidence" value="ECO:0000318"/>
    <property type="project" value="GO_Central"/>
</dbReference>
<dbReference type="GO" id="GO:0060021">
    <property type="term" value="P:roof of mouth development"/>
    <property type="evidence" value="ECO:0000250"/>
    <property type="project" value="UniProtKB"/>
</dbReference>
<dbReference type="GO" id="GO:0023019">
    <property type="term" value="P:signal transduction involved in regulation of gene expression"/>
    <property type="evidence" value="ECO:0007669"/>
    <property type="project" value="Ensembl"/>
</dbReference>
<dbReference type="GO" id="GO:0048863">
    <property type="term" value="P:stem cell differentiation"/>
    <property type="evidence" value="ECO:0007669"/>
    <property type="project" value="Ensembl"/>
</dbReference>
<dbReference type="GO" id="GO:0006366">
    <property type="term" value="P:transcription by RNA polymerase II"/>
    <property type="evidence" value="ECO:0007669"/>
    <property type="project" value="Ensembl"/>
</dbReference>
<dbReference type="CDD" id="cd00086">
    <property type="entry name" value="homeodomain"/>
    <property type="match status" value="1"/>
</dbReference>
<dbReference type="FunFam" id="1.10.10.60:FF:000134">
    <property type="entry name" value="Homeobox protein MSX-1"/>
    <property type="match status" value="1"/>
</dbReference>
<dbReference type="Gene3D" id="1.10.10.60">
    <property type="entry name" value="Homeodomain-like"/>
    <property type="match status" value="1"/>
</dbReference>
<dbReference type="InterPro" id="IPR001356">
    <property type="entry name" value="HD"/>
</dbReference>
<dbReference type="InterPro" id="IPR020479">
    <property type="entry name" value="HD_metazoa"/>
</dbReference>
<dbReference type="InterPro" id="IPR017970">
    <property type="entry name" value="Homeobox_CS"/>
</dbReference>
<dbReference type="InterPro" id="IPR009057">
    <property type="entry name" value="Homeodomain-like_sf"/>
</dbReference>
<dbReference type="InterPro" id="IPR050674">
    <property type="entry name" value="Msh_Homeobox_Regulators"/>
</dbReference>
<dbReference type="PANTHER" id="PTHR24338">
    <property type="entry name" value="HOMEOBOX PROTEIN MSX"/>
    <property type="match status" value="1"/>
</dbReference>
<dbReference type="PANTHER" id="PTHR24338:SF8">
    <property type="entry name" value="HOMEOBOX PROTEIN MSX-1"/>
    <property type="match status" value="1"/>
</dbReference>
<dbReference type="Pfam" id="PF00046">
    <property type="entry name" value="Homeodomain"/>
    <property type="match status" value="1"/>
</dbReference>
<dbReference type="PRINTS" id="PR00024">
    <property type="entry name" value="HOMEOBOX"/>
</dbReference>
<dbReference type="SMART" id="SM00389">
    <property type="entry name" value="HOX"/>
    <property type="match status" value="1"/>
</dbReference>
<dbReference type="SUPFAM" id="SSF46689">
    <property type="entry name" value="Homeodomain-like"/>
    <property type="match status" value="1"/>
</dbReference>
<dbReference type="PROSITE" id="PS00027">
    <property type="entry name" value="HOMEOBOX_1"/>
    <property type="match status" value="1"/>
</dbReference>
<dbReference type="PROSITE" id="PS50071">
    <property type="entry name" value="HOMEOBOX_2"/>
    <property type="match status" value="1"/>
</dbReference>
<accession>Q2VL88</accession>
<keyword id="KW-0217">Developmental protein</keyword>
<keyword id="KW-0238">DNA-binding</keyword>
<keyword id="KW-0371">Homeobox</keyword>
<keyword id="KW-1017">Isopeptide bond</keyword>
<keyword id="KW-0539">Nucleus</keyword>
<keyword id="KW-1185">Reference proteome</keyword>
<keyword id="KW-0678">Repressor</keyword>
<keyword id="KW-0804">Transcription</keyword>
<keyword id="KW-0805">Transcription regulation</keyword>
<keyword id="KW-0832">Ubl conjugation</keyword>